<gene>
    <name evidence="1" type="primary">rimP</name>
    <name type="ordered locus">SNSL254_A3546</name>
</gene>
<feature type="chain" id="PRO_0000384763" description="Ribosome maturation factor RimP">
    <location>
        <begin position="1"/>
        <end position="154"/>
    </location>
</feature>
<comment type="function">
    <text evidence="1">Required for maturation of 30S ribosomal subunits.</text>
</comment>
<comment type="subcellular location">
    <subcellularLocation>
        <location evidence="1">Cytoplasm</location>
    </subcellularLocation>
</comment>
<comment type="similarity">
    <text evidence="1">Belongs to the RimP family.</text>
</comment>
<dbReference type="EMBL" id="CP001113">
    <property type="protein sequence ID" value="ACF64572.1"/>
    <property type="molecule type" value="Genomic_DNA"/>
</dbReference>
<dbReference type="SMR" id="B4T700"/>
<dbReference type="KEGG" id="see:SNSL254_A3546"/>
<dbReference type="HOGENOM" id="CLU_070525_1_1_6"/>
<dbReference type="Proteomes" id="UP000008824">
    <property type="component" value="Chromosome"/>
</dbReference>
<dbReference type="GO" id="GO:0005829">
    <property type="term" value="C:cytosol"/>
    <property type="evidence" value="ECO:0007669"/>
    <property type="project" value="TreeGrafter"/>
</dbReference>
<dbReference type="GO" id="GO:0000028">
    <property type="term" value="P:ribosomal small subunit assembly"/>
    <property type="evidence" value="ECO:0007669"/>
    <property type="project" value="TreeGrafter"/>
</dbReference>
<dbReference type="GO" id="GO:0006412">
    <property type="term" value="P:translation"/>
    <property type="evidence" value="ECO:0007669"/>
    <property type="project" value="TreeGrafter"/>
</dbReference>
<dbReference type="CDD" id="cd01734">
    <property type="entry name" value="YlxS_C"/>
    <property type="match status" value="1"/>
</dbReference>
<dbReference type="FunFam" id="2.30.30.180:FF:000001">
    <property type="entry name" value="Ribosome maturation factor RimP"/>
    <property type="match status" value="1"/>
</dbReference>
<dbReference type="FunFam" id="3.30.300.70:FF:000001">
    <property type="entry name" value="Ribosome maturation factor RimP"/>
    <property type="match status" value="1"/>
</dbReference>
<dbReference type="Gene3D" id="2.30.30.180">
    <property type="entry name" value="Ribosome maturation factor RimP, C-terminal domain"/>
    <property type="match status" value="1"/>
</dbReference>
<dbReference type="Gene3D" id="3.30.300.70">
    <property type="entry name" value="RimP-like superfamily, N-terminal"/>
    <property type="match status" value="1"/>
</dbReference>
<dbReference type="HAMAP" id="MF_01077">
    <property type="entry name" value="RimP"/>
    <property type="match status" value="1"/>
</dbReference>
<dbReference type="InterPro" id="IPR003728">
    <property type="entry name" value="Ribosome_maturation_RimP"/>
</dbReference>
<dbReference type="InterPro" id="IPR028998">
    <property type="entry name" value="RimP_C"/>
</dbReference>
<dbReference type="InterPro" id="IPR036847">
    <property type="entry name" value="RimP_C_sf"/>
</dbReference>
<dbReference type="InterPro" id="IPR028989">
    <property type="entry name" value="RimP_N"/>
</dbReference>
<dbReference type="InterPro" id="IPR035956">
    <property type="entry name" value="RimP_N_sf"/>
</dbReference>
<dbReference type="NCBIfam" id="NF000927">
    <property type="entry name" value="PRK00092.1-1"/>
    <property type="match status" value="1"/>
</dbReference>
<dbReference type="PANTHER" id="PTHR33867">
    <property type="entry name" value="RIBOSOME MATURATION FACTOR RIMP"/>
    <property type="match status" value="1"/>
</dbReference>
<dbReference type="PANTHER" id="PTHR33867:SF1">
    <property type="entry name" value="RIBOSOME MATURATION FACTOR RIMP"/>
    <property type="match status" value="1"/>
</dbReference>
<dbReference type="Pfam" id="PF17384">
    <property type="entry name" value="DUF150_C"/>
    <property type="match status" value="1"/>
</dbReference>
<dbReference type="Pfam" id="PF02576">
    <property type="entry name" value="RimP_N"/>
    <property type="match status" value="1"/>
</dbReference>
<dbReference type="SUPFAM" id="SSF74942">
    <property type="entry name" value="YhbC-like, C-terminal domain"/>
    <property type="match status" value="1"/>
</dbReference>
<dbReference type="SUPFAM" id="SSF75420">
    <property type="entry name" value="YhbC-like, N-terminal domain"/>
    <property type="match status" value="1"/>
</dbReference>
<sequence length="154" mass="16996">MGVGLSTLEQKLTEMITAPVEALGYELVGIEFIRGRTSTLRIYIDSEDGINVDDCADVSHQVSAVLDVEDPISVAYNLEVSSPGLDRPMFTADHYARFQGEEVALVLRMAVQNRRKWQGIIKAVDGEMITVTVEGKDEVFALSNIQKANLVPHF</sequence>
<keyword id="KW-0963">Cytoplasm</keyword>
<keyword id="KW-0690">Ribosome biogenesis</keyword>
<protein>
    <recommendedName>
        <fullName evidence="1">Ribosome maturation factor RimP</fullName>
    </recommendedName>
</protein>
<evidence type="ECO:0000255" key="1">
    <source>
        <dbReference type="HAMAP-Rule" id="MF_01077"/>
    </source>
</evidence>
<proteinExistence type="inferred from homology"/>
<name>RIMP_SALNS</name>
<organism>
    <name type="scientific">Salmonella newport (strain SL254)</name>
    <dbReference type="NCBI Taxonomy" id="423368"/>
    <lineage>
        <taxon>Bacteria</taxon>
        <taxon>Pseudomonadati</taxon>
        <taxon>Pseudomonadota</taxon>
        <taxon>Gammaproteobacteria</taxon>
        <taxon>Enterobacterales</taxon>
        <taxon>Enterobacteriaceae</taxon>
        <taxon>Salmonella</taxon>
    </lineage>
</organism>
<accession>B4T700</accession>
<reference key="1">
    <citation type="journal article" date="2011" name="J. Bacteriol.">
        <title>Comparative genomics of 28 Salmonella enterica isolates: evidence for CRISPR-mediated adaptive sublineage evolution.</title>
        <authorList>
            <person name="Fricke W.F."/>
            <person name="Mammel M.K."/>
            <person name="McDermott P.F."/>
            <person name="Tartera C."/>
            <person name="White D.G."/>
            <person name="Leclerc J.E."/>
            <person name="Ravel J."/>
            <person name="Cebula T.A."/>
        </authorList>
    </citation>
    <scope>NUCLEOTIDE SEQUENCE [LARGE SCALE GENOMIC DNA]</scope>
    <source>
        <strain>SL254</strain>
    </source>
</reference>